<dbReference type="EMBL" id="CR860627">
    <property type="protein sequence ID" value="CAH92747.1"/>
    <property type="molecule type" value="mRNA"/>
</dbReference>
<dbReference type="EMBL" id="CR861369">
    <property type="protein sequence ID" value="CAH93429.1"/>
    <property type="molecule type" value="mRNA"/>
</dbReference>
<dbReference type="RefSeq" id="NP_001126602.1">
    <molecule id="Q5R669-1"/>
    <property type="nucleotide sequence ID" value="NM_001133130.1"/>
</dbReference>
<dbReference type="SMR" id="Q5R669"/>
<dbReference type="FunCoup" id="Q5R669">
    <property type="interactions" value="2746"/>
</dbReference>
<dbReference type="STRING" id="9601.ENSPPYP00000014112"/>
<dbReference type="Ensembl" id="ENSPPYT00000046447.1">
    <molecule id="Q5R669-1"/>
    <property type="protein sequence ID" value="ENSPPYP00000032873.1"/>
    <property type="gene ID" value="ENSPPYG00000038287.1"/>
</dbReference>
<dbReference type="GeneID" id="100173599"/>
<dbReference type="KEGG" id="pon:100173599"/>
<dbReference type="CTD" id="28951"/>
<dbReference type="eggNOG" id="KOG0583">
    <property type="taxonomic scope" value="Eukaryota"/>
</dbReference>
<dbReference type="GeneTree" id="ENSGT00950000182986"/>
<dbReference type="HOGENOM" id="CLU_000288_13_1_1"/>
<dbReference type="InParanoid" id="Q5R669"/>
<dbReference type="OMA" id="CFCLPPH"/>
<dbReference type="OrthoDB" id="410920at2759"/>
<dbReference type="TreeFam" id="TF329785"/>
<dbReference type="Proteomes" id="UP000001595">
    <property type="component" value="Chromosome 2A"/>
</dbReference>
<dbReference type="GO" id="GO:0005737">
    <property type="term" value="C:cytoplasm"/>
    <property type="evidence" value="ECO:0000250"/>
    <property type="project" value="UniProtKB"/>
</dbReference>
<dbReference type="GO" id="GO:0005856">
    <property type="term" value="C:cytoskeleton"/>
    <property type="evidence" value="ECO:0007669"/>
    <property type="project" value="UniProtKB-SubCell"/>
</dbReference>
<dbReference type="GO" id="GO:0005634">
    <property type="term" value="C:nucleus"/>
    <property type="evidence" value="ECO:0007669"/>
    <property type="project" value="TreeGrafter"/>
</dbReference>
<dbReference type="GO" id="GO:0031434">
    <property type="term" value="F:mitogen-activated protein kinase kinase binding"/>
    <property type="evidence" value="ECO:0007669"/>
    <property type="project" value="TreeGrafter"/>
</dbReference>
<dbReference type="GO" id="GO:0004860">
    <property type="term" value="F:protein kinase inhibitor activity"/>
    <property type="evidence" value="ECO:0007669"/>
    <property type="project" value="UniProtKB-KW"/>
</dbReference>
<dbReference type="GO" id="GO:0061629">
    <property type="term" value="F:RNA polymerase II-specific DNA-binding transcription factor binding"/>
    <property type="evidence" value="ECO:0007669"/>
    <property type="project" value="Ensembl"/>
</dbReference>
<dbReference type="GO" id="GO:0031625">
    <property type="term" value="F:ubiquitin protein ligase binding"/>
    <property type="evidence" value="ECO:0007669"/>
    <property type="project" value="Ensembl"/>
</dbReference>
<dbReference type="GO" id="GO:0055106">
    <property type="term" value="F:ubiquitin-protein transferase regulator activity"/>
    <property type="evidence" value="ECO:0007669"/>
    <property type="project" value="Ensembl"/>
</dbReference>
<dbReference type="GO" id="GO:0045599">
    <property type="term" value="P:negative regulation of fat cell differentiation"/>
    <property type="evidence" value="ECO:0007669"/>
    <property type="project" value="Ensembl"/>
</dbReference>
<dbReference type="GO" id="GO:0032693">
    <property type="term" value="P:negative regulation of interleukin-10 production"/>
    <property type="evidence" value="ECO:0007669"/>
    <property type="project" value="Ensembl"/>
</dbReference>
<dbReference type="GO" id="GO:0032436">
    <property type="term" value="P:positive regulation of proteasomal ubiquitin-dependent protein catabolic process"/>
    <property type="evidence" value="ECO:0007669"/>
    <property type="project" value="Ensembl"/>
</dbReference>
<dbReference type="GO" id="GO:0043405">
    <property type="term" value="P:regulation of MAP kinase activity"/>
    <property type="evidence" value="ECO:0000250"/>
    <property type="project" value="UniProtKB"/>
</dbReference>
<dbReference type="CDD" id="cd14022">
    <property type="entry name" value="PK_TRB2"/>
    <property type="match status" value="1"/>
</dbReference>
<dbReference type="FunFam" id="1.10.510.10:FF:000153">
    <property type="entry name" value="Tribbles homolog 2"/>
    <property type="match status" value="1"/>
</dbReference>
<dbReference type="FunFam" id="3.30.200.20:FF:000253">
    <property type="entry name" value="tribbles homolog 2"/>
    <property type="match status" value="1"/>
</dbReference>
<dbReference type="Gene3D" id="3.30.200.20">
    <property type="entry name" value="Phosphorylase Kinase, domain 1"/>
    <property type="match status" value="1"/>
</dbReference>
<dbReference type="Gene3D" id="1.10.510.10">
    <property type="entry name" value="Transferase(Phosphotransferase) domain 1"/>
    <property type="match status" value="1"/>
</dbReference>
<dbReference type="InterPro" id="IPR011009">
    <property type="entry name" value="Kinase-like_dom_sf"/>
</dbReference>
<dbReference type="InterPro" id="IPR000719">
    <property type="entry name" value="Prot_kinase_dom"/>
</dbReference>
<dbReference type="InterPro" id="IPR024104">
    <property type="entry name" value="Tribbles/Ser_Thr_kinase_40"/>
</dbReference>
<dbReference type="PANTHER" id="PTHR22961">
    <property type="entry name" value="SER/THR PROTEIN KINASE-TRB"/>
    <property type="match status" value="1"/>
</dbReference>
<dbReference type="PANTHER" id="PTHR22961:SF15">
    <property type="entry name" value="TRIBBLES HOMOLOG 2"/>
    <property type="match status" value="1"/>
</dbReference>
<dbReference type="Pfam" id="PF00069">
    <property type="entry name" value="Pkinase"/>
    <property type="match status" value="1"/>
</dbReference>
<dbReference type="SUPFAM" id="SSF56112">
    <property type="entry name" value="Protein kinase-like (PK-like)"/>
    <property type="match status" value="1"/>
</dbReference>
<dbReference type="PROSITE" id="PS50011">
    <property type="entry name" value="PROTEIN_KINASE_DOM"/>
    <property type="match status" value="1"/>
</dbReference>
<gene>
    <name evidence="3" type="primary">TRIB2</name>
</gene>
<comment type="function">
    <text evidence="2 4">Interacts with MAPK kinases and regulates activation of MAP kinases. Does not display kinase activity (By similarity).</text>
</comment>
<comment type="subcellular location">
    <subcellularLocation>
        <location evidence="1">Cytoplasm</location>
    </subcellularLocation>
    <subcellularLocation>
        <location evidence="1">Cytoplasm</location>
        <location evidence="1">Cytoskeleton</location>
    </subcellularLocation>
    <text evidence="1">May associate with the cytoskeleton.</text>
</comment>
<comment type="alternative products">
    <event type="alternative splicing"/>
    <isoform>
        <id>Q5R669-1</id>
        <name evidence="8">1</name>
        <sequence type="displayed"/>
    </isoform>
    <isoform>
        <id>Q5R669-2</id>
        <name evidence="8">2</name>
        <sequence type="described" ref="VSP_051889 VSP_051890"/>
    </isoform>
</comment>
<comment type="domain">
    <text>The protein kinase domain is predicted to be catalytically inactive.</text>
</comment>
<comment type="similarity">
    <text evidence="8">Belongs to the protein kinase superfamily. CAMK Ser/Thr protein kinase family. Tribbles subfamily.</text>
</comment>
<protein>
    <recommendedName>
        <fullName>Tribbles homolog 2</fullName>
        <shortName>TRB-2</shortName>
    </recommendedName>
</protein>
<evidence type="ECO:0000250" key="1"/>
<evidence type="ECO:0000250" key="2">
    <source>
        <dbReference type="UniProtKB" id="Q28283"/>
    </source>
</evidence>
<evidence type="ECO:0000250" key="3">
    <source>
        <dbReference type="UniProtKB" id="Q96RU7"/>
    </source>
</evidence>
<evidence type="ECO:0000250" key="4">
    <source>
        <dbReference type="UniProtKB" id="Q96RU8"/>
    </source>
</evidence>
<evidence type="ECO:0000255" key="5">
    <source>
        <dbReference type="PROSITE-ProRule" id="PRU00159"/>
    </source>
</evidence>
<evidence type="ECO:0000256" key="6">
    <source>
        <dbReference type="SAM" id="MobiDB-lite"/>
    </source>
</evidence>
<evidence type="ECO:0000303" key="7">
    <source ref="1"/>
</evidence>
<evidence type="ECO:0000305" key="8"/>
<evidence type="ECO:0000312" key="9">
    <source>
        <dbReference type="EMBL" id="CAH93429.1"/>
    </source>
</evidence>
<organism>
    <name type="scientific">Pongo abelii</name>
    <name type="common">Sumatran orangutan</name>
    <name type="synonym">Pongo pygmaeus abelii</name>
    <dbReference type="NCBI Taxonomy" id="9601"/>
    <lineage>
        <taxon>Eukaryota</taxon>
        <taxon>Metazoa</taxon>
        <taxon>Chordata</taxon>
        <taxon>Craniata</taxon>
        <taxon>Vertebrata</taxon>
        <taxon>Euteleostomi</taxon>
        <taxon>Mammalia</taxon>
        <taxon>Eutheria</taxon>
        <taxon>Euarchontoglires</taxon>
        <taxon>Primates</taxon>
        <taxon>Haplorrhini</taxon>
        <taxon>Catarrhini</taxon>
        <taxon>Hominidae</taxon>
        <taxon>Pongo</taxon>
    </lineage>
</organism>
<feature type="chain" id="PRO_0000131865" description="Tribbles homolog 2">
    <location>
        <begin position="1"/>
        <end position="343"/>
    </location>
</feature>
<feature type="domain" description="Protein kinase" evidence="5">
    <location>
        <begin position="61"/>
        <end position="308"/>
    </location>
</feature>
<feature type="region of interest" description="Disordered" evidence="6">
    <location>
        <begin position="25"/>
        <end position="50"/>
    </location>
</feature>
<feature type="compositionally biased region" description="Polar residues" evidence="6">
    <location>
        <begin position="29"/>
        <end position="45"/>
    </location>
</feature>
<feature type="splice variant" id="VSP_051889" description="In isoform 2." evidence="7">
    <location>
        <begin position="1"/>
        <end position="136"/>
    </location>
</feature>
<feature type="splice variant" id="VSP_051890" description="In isoform 2." evidence="7">
    <original>N</original>
    <variation>NRAHAPRRLSRYQE</variation>
    <location>
        <position position="343"/>
    </location>
</feature>
<name>TRIB2_PONAB</name>
<proteinExistence type="evidence at transcript level"/>
<accession>Q5R669</accession>
<accession>Q5R487</accession>
<keyword id="KW-0025">Alternative splicing</keyword>
<keyword id="KW-0963">Cytoplasm</keyword>
<keyword id="KW-0206">Cytoskeleton</keyword>
<keyword id="KW-0649">Protein kinase inhibitor</keyword>
<keyword id="KW-1185">Reference proteome</keyword>
<reference evidence="8 9" key="1">
    <citation type="submission" date="2004-11" db="EMBL/GenBank/DDBJ databases">
        <authorList>
            <consortium name="The German cDNA consortium"/>
        </authorList>
    </citation>
    <scope>NUCLEOTIDE SEQUENCE [LARGE SCALE MRNA] (ISOFORMS 1 AND 2)</scope>
    <source>
        <tissue evidence="9">Brain cortex</tissue>
    </source>
</reference>
<sequence length="343" mass="38787">MNIHRSTPITIARYGRSRNKTQDFEELSSIRSAEPSQSFSPNLGSPSPPETPNLSHCVSCIGKYLLLEPLEGDHVFRAVHLHSGEELVCKVFDISCYQESLAPCFCLSAHSNINQITEIILGETKAYVFFERSYGDMHSFVRTCKKLREEEAARLFYQIASAVAHCHDGGLVLRDLKLRKFIFKDEERTRVKLESLEDAYILRGDDDSLSDKHGCPAYVSPEILNTSGSYSGKAADVWSLGVMLYTMLVGRYPFHDIEPSSLFSKIRRGQFNIPETLSPKAKCLIRSILRREPSERLTSQEILDHPWFSTDFSVSNSGYGAKEVSDQLVPDVNMEENLDPFFN</sequence>